<name>Y255_YERPY</name>
<accession>B1JIT3</accession>
<reference key="1">
    <citation type="submission" date="2008-02" db="EMBL/GenBank/DDBJ databases">
        <title>Complete sequence of Yersinia pseudotuberculosis YPIII.</title>
        <authorList>
            <consortium name="US DOE Joint Genome Institute"/>
            <person name="Copeland A."/>
            <person name="Lucas S."/>
            <person name="Lapidus A."/>
            <person name="Glavina del Rio T."/>
            <person name="Dalin E."/>
            <person name="Tice H."/>
            <person name="Bruce D."/>
            <person name="Goodwin L."/>
            <person name="Pitluck S."/>
            <person name="Munk A.C."/>
            <person name="Brettin T."/>
            <person name="Detter J.C."/>
            <person name="Han C."/>
            <person name="Tapia R."/>
            <person name="Schmutz J."/>
            <person name="Larimer F."/>
            <person name="Land M."/>
            <person name="Hauser L."/>
            <person name="Challacombe J.F."/>
            <person name="Green L."/>
            <person name="Lindler L.E."/>
            <person name="Nikolich M.P."/>
            <person name="Richardson P."/>
        </authorList>
    </citation>
    <scope>NUCLEOTIDE SEQUENCE [LARGE SCALE GENOMIC DNA]</scope>
    <source>
        <strain>YPIII</strain>
    </source>
</reference>
<sequence length="78" mass="8907">MIIPWQQVDSETLDNLLEAFVLREGTDYGEHERSLTEKVADVRRQLVSGEAVLVWSELHETINIMPRGSFHAGAEEQQ</sequence>
<gene>
    <name type="ordered locus">YPK_0255</name>
</gene>
<evidence type="ECO:0000255" key="1">
    <source>
        <dbReference type="HAMAP-Rule" id="MF_00690"/>
    </source>
</evidence>
<protein>
    <recommendedName>
        <fullName evidence="1">UPF0270 protein YPK_0255</fullName>
    </recommendedName>
</protein>
<comment type="similarity">
    <text evidence="1">Belongs to the UPF0270 family.</text>
</comment>
<dbReference type="EMBL" id="CP000950">
    <property type="protein sequence ID" value="ACA66568.1"/>
    <property type="molecule type" value="Genomic_DNA"/>
</dbReference>
<dbReference type="RefSeq" id="WP_011193222.1">
    <property type="nucleotide sequence ID" value="NZ_CP009792.1"/>
</dbReference>
<dbReference type="SMR" id="B1JIT3"/>
<dbReference type="KEGG" id="ypy:YPK_0255"/>
<dbReference type="PATRIC" id="fig|502800.11.peg.861"/>
<dbReference type="Gene3D" id="1.10.10.610">
    <property type="entry name" value="YehU-like"/>
    <property type="match status" value="1"/>
</dbReference>
<dbReference type="HAMAP" id="MF_00690">
    <property type="entry name" value="UPF0270"/>
    <property type="match status" value="1"/>
</dbReference>
<dbReference type="InterPro" id="IPR010648">
    <property type="entry name" value="UPF0270"/>
</dbReference>
<dbReference type="InterPro" id="IPR036685">
    <property type="entry name" value="YehU-like_sf"/>
</dbReference>
<dbReference type="NCBIfam" id="NF003438">
    <property type="entry name" value="PRK04966.1"/>
    <property type="match status" value="1"/>
</dbReference>
<dbReference type="Pfam" id="PF06794">
    <property type="entry name" value="UPF0270"/>
    <property type="match status" value="1"/>
</dbReference>
<dbReference type="PIRSF" id="PIRSF006169">
    <property type="entry name" value="UCP006169"/>
    <property type="match status" value="1"/>
</dbReference>
<dbReference type="SUPFAM" id="SSF118001">
    <property type="entry name" value="YehU-like"/>
    <property type="match status" value="1"/>
</dbReference>
<organism>
    <name type="scientific">Yersinia pseudotuberculosis serotype O:3 (strain YPIII)</name>
    <dbReference type="NCBI Taxonomy" id="502800"/>
    <lineage>
        <taxon>Bacteria</taxon>
        <taxon>Pseudomonadati</taxon>
        <taxon>Pseudomonadota</taxon>
        <taxon>Gammaproteobacteria</taxon>
        <taxon>Enterobacterales</taxon>
        <taxon>Yersiniaceae</taxon>
        <taxon>Yersinia</taxon>
    </lineage>
</organism>
<proteinExistence type="inferred from homology"/>
<feature type="chain" id="PRO_1000132031" description="UPF0270 protein YPK_0255">
    <location>
        <begin position="1"/>
        <end position="78"/>
    </location>
</feature>